<gene>
    <name evidence="1" type="primary">lepA</name>
    <name type="ordered locus">BUsg_251</name>
</gene>
<accession>Q8K9Q9</accession>
<comment type="function">
    <text evidence="1">Required for accurate and efficient protein synthesis under certain stress conditions. May act as a fidelity factor of the translation reaction, by catalyzing a one-codon backward translocation of tRNAs on improperly translocated ribosomes. Back-translocation proceeds from a post-translocation (POST) complex to a pre-translocation (PRE) complex, thus giving elongation factor G a second chance to translocate the tRNAs correctly. Binds to ribosomes in a GTP-dependent manner.</text>
</comment>
<comment type="catalytic activity">
    <reaction evidence="1">
        <text>GTP + H2O = GDP + phosphate + H(+)</text>
        <dbReference type="Rhea" id="RHEA:19669"/>
        <dbReference type="ChEBI" id="CHEBI:15377"/>
        <dbReference type="ChEBI" id="CHEBI:15378"/>
        <dbReference type="ChEBI" id="CHEBI:37565"/>
        <dbReference type="ChEBI" id="CHEBI:43474"/>
        <dbReference type="ChEBI" id="CHEBI:58189"/>
        <dbReference type="EC" id="3.6.5.n1"/>
    </reaction>
</comment>
<comment type="subcellular location">
    <subcellularLocation>
        <location evidence="1">Cell membrane</location>
        <topology evidence="1">Peripheral membrane protein</topology>
        <orientation evidence="1">Cytoplasmic side</orientation>
    </subcellularLocation>
</comment>
<comment type="similarity">
    <text evidence="1">Belongs to the TRAFAC class translation factor GTPase superfamily. Classic translation factor GTPase family. LepA subfamily.</text>
</comment>
<dbReference type="EC" id="3.6.5.n1" evidence="1"/>
<dbReference type="EMBL" id="AE013218">
    <property type="protein sequence ID" value="AAM67810.1"/>
    <property type="molecule type" value="Genomic_DNA"/>
</dbReference>
<dbReference type="SMR" id="Q8K9Q9"/>
<dbReference type="STRING" id="198804.BUsg_251"/>
<dbReference type="KEGG" id="bas:BUsg_251"/>
<dbReference type="eggNOG" id="COG0481">
    <property type="taxonomic scope" value="Bacteria"/>
</dbReference>
<dbReference type="HOGENOM" id="CLU_009995_3_3_6"/>
<dbReference type="Proteomes" id="UP000000416">
    <property type="component" value="Chromosome"/>
</dbReference>
<dbReference type="GO" id="GO:0005886">
    <property type="term" value="C:plasma membrane"/>
    <property type="evidence" value="ECO:0007669"/>
    <property type="project" value="UniProtKB-SubCell"/>
</dbReference>
<dbReference type="GO" id="GO:0005525">
    <property type="term" value="F:GTP binding"/>
    <property type="evidence" value="ECO:0007669"/>
    <property type="project" value="UniProtKB-UniRule"/>
</dbReference>
<dbReference type="GO" id="GO:0003924">
    <property type="term" value="F:GTPase activity"/>
    <property type="evidence" value="ECO:0007669"/>
    <property type="project" value="UniProtKB-UniRule"/>
</dbReference>
<dbReference type="GO" id="GO:0097216">
    <property type="term" value="F:guanosine tetraphosphate binding"/>
    <property type="evidence" value="ECO:0007669"/>
    <property type="project" value="UniProtKB-ARBA"/>
</dbReference>
<dbReference type="GO" id="GO:0043022">
    <property type="term" value="F:ribosome binding"/>
    <property type="evidence" value="ECO:0007669"/>
    <property type="project" value="UniProtKB-UniRule"/>
</dbReference>
<dbReference type="GO" id="GO:0003746">
    <property type="term" value="F:translation elongation factor activity"/>
    <property type="evidence" value="ECO:0007669"/>
    <property type="project" value="UniProtKB-UniRule"/>
</dbReference>
<dbReference type="GO" id="GO:0045727">
    <property type="term" value="P:positive regulation of translation"/>
    <property type="evidence" value="ECO:0007669"/>
    <property type="project" value="UniProtKB-UniRule"/>
</dbReference>
<dbReference type="CDD" id="cd03699">
    <property type="entry name" value="EF4_II"/>
    <property type="match status" value="1"/>
</dbReference>
<dbReference type="CDD" id="cd16260">
    <property type="entry name" value="EF4_III"/>
    <property type="match status" value="1"/>
</dbReference>
<dbReference type="CDD" id="cd01890">
    <property type="entry name" value="LepA"/>
    <property type="match status" value="1"/>
</dbReference>
<dbReference type="CDD" id="cd03709">
    <property type="entry name" value="lepA_C"/>
    <property type="match status" value="1"/>
</dbReference>
<dbReference type="FunFam" id="3.40.50.300:FF:000078">
    <property type="entry name" value="Elongation factor 4"/>
    <property type="match status" value="1"/>
</dbReference>
<dbReference type="FunFam" id="2.40.30.10:FF:000015">
    <property type="entry name" value="Translation factor GUF1, mitochondrial"/>
    <property type="match status" value="1"/>
</dbReference>
<dbReference type="FunFam" id="3.30.70.240:FF:000007">
    <property type="entry name" value="Translation factor GUF1, mitochondrial"/>
    <property type="match status" value="1"/>
</dbReference>
<dbReference type="FunFam" id="3.30.70.2570:FF:000001">
    <property type="entry name" value="Translation factor GUF1, mitochondrial"/>
    <property type="match status" value="1"/>
</dbReference>
<dbReference type="FunFam" id="3.30.70.870:FF:000004">
    <property type="entry name" value="Translation factor GUF1, mitochondrial"/>
    <property type="match status" value="1"/>
</dbReference>
<dbReference type="Gene3D" id="3.30.70.240">
    <property type="match status" value="1"/>
</dbReference>
<dbReference type="Gene3D" id="3.30.70.2570">
    <property type="entry name" value="Elongation factor 4, C-terminal domain"/>
    <property type="match status" value="1"/>
</dbReference>
<dbReference type="Gene3D" id="3.30.70.870">
    <property type="entry name" value="Elongation Factor G (Translational Gtpase), domain 3"/>
    <property type="match status" value="1"/>
</dbReference>
<dbReference type="Gene3D" id="3.40.50.300">
    <property type="entry name" value="P-loop containing nucleotide triphosphate hydrolases"/>
    <property type="match status" value="1"/>
</dbReference>
<dbReference type="Gene3D" id="2.40.30.10">
    <property type="entry name" value="Translation factors"/>
    <property type="match status" value="1"/>
</dbReference>
<dbReference type="HAMAP" id="MF_00071">
    <property type="entry name" value="LepA"/>
    <property type="match status" value="1"/>
</dbReference>
<dbReference type="InterPro" id="IPR006297">
    <property type="entry name" value="EF-4"/>
</dbReference>
<dbReference type="InterPro" id="IPR035647">
    <property type="entry name" value="EFG_III/V"/>
</dbReference>
<dbReference type="InterPro" id="IPR000640">
    <property type="entry name" value="EFG_V-like"/>
</dbReference>
<dbReference type="InterPro" id="IPR004161">
    <property type="entry name" value="EFTu-like_2"/>
</dbReference>
<dbReference type="InterPro" id="IPR031157">
    <property type="entry name" value="G_TR_CS"/>
</dbReference>
<dbReference type="InterPro" id="IPR038363">
    <property type="entry name" value="LepA_C_sf"/>
</dbReference>
<dbReference type="InterPro" id="IPR013842">
    <property type="entry name" value="LepA_CTD"/>
</dbReference>
<dbReference type="InterPro" id="IPR035654">
    <property type="entry name" value="LepA_IV"/>
</dbReference>
<dbReference type="InterPro" id="IPR027417">
    <property type="entry name" value="P-loop_NTPase"/>
</dbReference>
<dbReference type="InterPro" id="IPR005225">
    <property type="entry name" value="Small_GTP-bd"/>
</dbReference>
<dbReference type="InterPro" id="IPR000795">
    <property type="entry name" value="T_Tr_GTP-bd_dom"/>
</dbReference>
<dbReference type="NCBIfam" id="TIGR01393">
    <property type="entry name" value="lepA"/>
    <property type="match status" value="1"/>
</dbReference>
<dbReference type="NCBIfam" id="TIGR00231">
    <property type="entry name" value="small_GTP"/>
    <property type="match status" value="1"/>
</dbReference>
<dbReference type="PANTHER" id="PTHR43512:SF4">
    <property type="entry name" value="TRANSLATION FACTOR GUF1 HOMOLOG, CHLOROPLASTIC"/>
    <property type="match status" value="1"/>
</dbReference>
<dbReference type="PANTHER" id="PTHR43512">
    <property type="entry name" value="TRANSLATION FACTOR GUF1-RELATED"/>
    <property type="match status" value="1"/>
</dbReference>
<dbReference type="Pfam" id="PF00679">
    <property type="entry name" value="EFG_C"/>
    <property type="match status" value="1"/>
</dbReference>
<dbReference type="Pfam" id="PF00009">
    <property type="entry name" value="GTP_EFTU"/>
    <property type="match status" value="1"/>
</dbReference>
<dbReference type="Pfam" id="PF03144">
    <property type="entry name" value="GTP_EFTU_D2"/>
    <property type="match status" value="1"/>
</dbReference>
<dbReference type="Pfam" id="PF06421">
    <property type="entry name" value="LepA_C"/>
    <property type="match status" value="1"/>
</dbReference>
<dbReference type="PRINTS" id="PR00315">
    <property type="entry name" value="ELONGATNFCT"/>
</dbReference>
<dbReference type="SUPFAM" id="SSF54980">
    <property type="entry name" value="EF-G C-terminal domain-like"/>
    <property type="match status" value="2"/>
</dbReference>
<dbReference type="SUPFAM" id="SSF52540">
    <property type="entry name" value="P-loop containing nucleoside triphosphate hydrolases"/>
    <property type="match status" value="1"/>
</dbReference>
<dbReference type="PROSITE" id="PS00301">
    <property type="entry name" value="G_TR_1"/>
    <property type="match status" value="1"/>
</dbReference>
<dbReference type="PROSITE" id="PS51722">
    <property type="entry name" value="G_TR_2"/>
    <property type="match status" value="1"/>
</dbReference>
<reference key="1">
    <citation type="journal article" date="2002" name="Science">
        <title>50 million years of genomic stasis in endosymbiotic bacteria.</title>
        <authorList>
            <person name="Tamas I."/>
            <person name="Klasson L."/>
            <person name="Canbaeck B."/>
            <person name="Naeslund A.K."/>
            <person name="Eriksson A.-S."/>
            <person name="Wernegreen J.J."/>
            <person name="Sandstroem J.P."/>
            <person name="Moran N.A."/>
            <person name="Andersson S.G.E."/>
        </authorList>
    </citation>
    <scope>NUCLEOTIDE SEQUENCE [LARGE SCALE GENOMIC DNA]</scope>
    <source>
        <strain>Sg</strain>
    </source>
</reference>
<proteinExistence type="inferred from homology"/>
<evidence type="ECO:0000255" key="1">
    <source>
        <dbReference type="HAMAP-Rule" id="MF_00071"/>
    </source>
</evidence>
<organism>
    <name type="scientific">Buchnera aphidicola subsp. Schizaphis graminum (strain Sg)</name>
    <dbReference type="NCBI Taxonomy" id="198804"/>
    <lineage>
        <taxon>Bacteria</taxon>
        <taxon>Pseudomonadati</taxon>
        <taxon>Pseudomonadota</taxon>
        <taxon>Gammaproteobacteria</taxon>
        <taxon>Enterobacterales</taxon>
        <taxon>Erwiniaceae</taxon>
        <taxon>Buchnera</taxon>
    </lineage>
</organism>
<protein>
    <recommendedName>
        <fullName evidence="1">Elongation factor 4</fullName>
        <shortName evidence="1">EF-4</shortName>
        <ecNumber evidence="1">3.6.5.n1</ecNumber>
    </recommendedName>
    <alternativeName>
        <fullName evidence="1">Ribosomal back-translocase LepA</fullName>
    </alternativeName>
</protein>
<name>LEPA_BUCAP</name>
<keyword id="KW-1003">Cell membrane</keyword>
<keyword id="KW-0342">GTP-binding</keyword>
<keyword id="KW-0378">Hydrolase</keyword>
<keyword id="KW-0472">Membrane</keyword>
<keyword id="KW-0547">Nucleotide-binding</keyword>
<keyword id="KW-0648">Protein biosynthesis</keyword>
<sequence>MVKKMKNIRNFSIIAHIDHGKSTLSDRLIQKCGGLSEREMSDQVLDSMDLEKERGITIKAQSVMIDYKDKNGNVFHLNFIDTPGHVNFSYEVSRSLAACEGALLVVDSSQGVEAQTLANCATALEMKLSIVPVLNKIDLPNSNPEKVAREIKEIIGISALDAIRCSAKTGQGIEELIEQIIKKIPAPDGDEKKPLQALIIDSWFDNYLGVVSLIRIKNGIISKKDKIKVMSTGKTYFVDHLGIFTPKKINKNYLKCGEVGWIVCGIKNISAAPVGDTLTNAKNPAMNMLTGFKKIKPQIYAGLFPVTSDQYEIFRDALGKLSLNDSSLFYEPINSTALGFGFRCGFLGLLHMEIVQARLEREYSLNLISTAPNVIYQIEFNNGEKIYLDTPSNFPVDNKIRKIKEPIVECNILLPPKFLGPVMKLCIKKRGTEINMIYHEQQVSLKYHIPMNEVVLNFFDELKSVSSGYASLEYDFKYFKTVKMVRIDILINSERVDALTVISYYKNAQNRAREIVNKMKELIPRHQFDINIQATINNSIVARSTIKQLRKNVLAKCYGGDISRKKKLLKKQKDGKKRMKKIGNVNMPKTAFLDILNIHKD</sequence>
<feature type="chain" id="PRO_0000176247" description="Elongation factor 4">
    <location>
        <begin position="1"/>
        <end position="601"/>
    </location>
</feature>
<feature type="domain" description="tr-type G">
    <location>
        <begin position="6"/>
        <end position="188"/>
    </location>
</feature>
<feature type="binding site" evidence="1">
    <location>
        <begin position="18"/>
        <end position="23"/>
    </location>
    <ligand>
        <name>GTP</name>
        <dbReference type="ChEBI" id="CHEBI:37565"/>
    </ligand>
</feature>
<feature type="binding site" evidence="1">
    <location>
        <begin position="135"/>
        <end position="138"/>
    </location>
    <ligand>
        <name>GTP</name>
        <dbReference type="ChEBI" id="CHEBI:37565"/>
    </ligand>
</feature>